<evidence type="ECO:0000255" key="1">
    <source>
        <dbReference type="PROSITE-ProRule" id="PRU00390"/>
    </source>
</evidence>
<evidence type="ECO:0000255" key="2">
    <source>
        <dbReference type="PROSITE-ProRule" id="PRU00797"/>
    </source>
</evidence>
<evidence type="ECO:0000305" key="3"/>
<evidence type="ECO:0007829" key="4">
    <source>
        <dbReference type="PDB" id="2O3F"/>
    </source>
</evidence>
<keyword id="KW-0002">3D-structure</keyword>
<keyword id="KW-0238">DNA-binding</keyword>
<keyword id="KW-1185">Reference proteome</keyword>
<keyword id="KW-0804">Transcription</keyword>
<keyword id="KW-0805">Transcription regulation</keyword>
<accession>Q45581</accession>
<accession>Q45580</accession>
<reference key="1">
    <citation type="journal article" date="1997" name="Microbiology">
        <title>Sequence and analysis of a 31 kb segment of the Bacillus subtilis chromosome in the area of the rrnH and rrnG operons.</title>
        <authorList>
            <person name="Liu H."/>
            <person name="Haga K."/>
            <person name="Yasumoto K."/>
            <person name="Ohashi Y."/>
            <person name="Yoshikawa H."/>
            <person name="Takahashi H."/>
        </authorList>
    </citation>
    <scope>NUCLEOTIDE SEQUENCE [GENOMIC DNA]</scope>
    <source>
        <strain>168</strain>
    </source>
</reference>
<reference key="2">
    <citation type="journal article" date="1997" name="Nature">
        <title>The complete genome sequence of the Gram-positive bacterium Bacillus subtilis.</title>
        <authorList>
            <person name="Kunst F."/>
            <person name="Ogasawara N."/>
            <person name="Moszer I."/>
            <person name="Albertini A.M."/>
            <person name="Alloni G."/>
            <person name="Azevedo V."/>
            <person name="Bertero M.G."/>
            <person name="Bessieres P."/>
            <person name="Bolotin A."/>
            <person name="Borchert S."/>
            <person name="Borriss R."/>
            <person name="Boursier L."/>
            <person name="Brans A."/>
            <person name="Braun M."/>
            <person name="Brignell S.C."/>
            <person name="Bron S."/>
            <person name="Brouillet S."/>
            <person name="Bruschi C.V."/>
            <person name="Caldwell B."/>
            <person name="Capuano V."/>
            <person name="Carter N.M."/>
            <person name="Choi S.-K."/>
            <person name="Codani J.-J."/>
            <person name="Connerton I.F."/>
            <person name="Cummings N.J."/>
            <person name="Daniel R.A."/>
            <person name="Denizot F."/>
            <person name="Devine K.M."/>
            <person name="Duesterhoeft A."/>
            <person name="Ehrlich S.D."/>
            <person name="Emmerson P.T."/>
            <person name="Entian K.-D."/>
            <person name="Errington J."/>
            <person name="Fabret C."/>
            <person name="Ferrari E."/>
            <person name="Foulger D."/>
            <person name="Fritz C."/>
            <person name="Fujita M."/>
            <person name="Fujita Y."/>
            <person name="Fuma S."/>
            <person name="Galizzi A."/>
            <person name="Galleron N."/>
            <person name="Ghim S.-Y."/>
            <person name="Glaser P."/>
            <person name="Goffeau A."/>
            <person name="Golightly E.J."/>
            <person name="Grandi G."/>
            <person name="Guiseppi G."/>
            <person name="Guy B.J."/>
            <person name="Haga K."/>
            <person name="Haiech J."/>
            <person name="Harwood C.R."/>
            <person name="Henaut A."/>
            <person name="Hilbert H."/>
            <person name="Holsappel S."/>
            <person name="Hosono S."/>
            <person name="Hullo M.-F."/>
            <person name="Itaya M."/>
            <person name="Jones L.-M."/>
            <person name="Joris B."/>
            <person name="Karamata D."/>
            <person name="Kasahara Y."/>
            <person name="Klaerr-Blanchard M."/>
            <person name="Klein C."/>
            <person name="Kobayashi Y."/>
            <person name="Koetter P."/>
            <person name="Koningstein G."/>
            <person name="Krogh S."/>
            <person name="Kumano M."/>
            <person name="Kurita K."/>
            <person name="Lapidus A."/>
            <person name="Lardinois S."/>
            <person name="Lauber J."/>
            <person name="Lazarevic V."/>
            <person name="Lee S.-M."/>
            <person name="Levine A."/>
            <person name="Liu H."/>
            <person name="Masuda S."/>
            <person name="Mauel C."/>
            <person name="Medigue C."/>
            <person name="Medina N."/>
            <person name="Mellado R.P."/>
            <person name="Mizuno M."/>
            <person name="Moestl D."/>
            <person name="Nakai S."/>
            <person name="Noback M."/>
            <person name="Noone D."/>
            <person name="O'Reilly M."/>
            <person name="Ogawa K."/>
            <person name="Ogiwara A."/>
            <person name="Oudega B."/>
            <person name="Park S.-H."/>
            <person name="Parro V."/>
            <person name="Pohl T.M."/>
            <person name="Portetelle D."/>
            <person name="Porwollik S."/>
            <person name="Prescott A.M."/>
            <person name="Presecan E."/>
            <person name="Pujic P."/>
            <person name="Purnelle B."/>
            <person name="Rapoport G."/>
            <person name="Rey M."/>
            <person name="Reynolds S."/>
            <person name="Rieger M."/>
            <person name="Rivolta C."/>
            <person name="Rocha E."/>
            <person name="Roche B."/>
            <person name="Rose M."/>
            <person name="Sadaie Y."/>
            <person name="Sato T."/>
            <person name="Scanlan E."/>
            <person name="Schleich S."/>
            <person name="Schroeter R."/>
            <person name="Scoffone F."/>
            <person name="Sekiguchi J."/>
            <person name="Sekowska A."/>
            <person name="Seror S.J."/>
            <person name="Serror P."/>
            <person name="Shin B.-S."/>
            <person name="Soldo B."/>
            <person name="Sorokin A."/>
            <person name="Tacconi E."/>
            <person name="Takagi T."/>
            <person name="Takahashi H."/>
            <person name="Takemaru K."/>
            <person name="Takeuchi M."/>
            <person name="Tamakoshi A."/>
            <person name="Tanaka T."/>
            <person name="Terpstra P."/>
            <person name="Tognoni A."/>
            <person name="Tosato V."/>
            <person name="Uchiyama S."/>
            <person name="Vandenbol M."/>
            <person name="Vannier F."/>
            <person name="Vassarotti A."/>
            <person name="Viari A."/>
            <person name="Wambutt R."/>
            <person name="Wedler E."/>
            <person name="Wedler H."/>
            <person name="Weitzenegger T."/>
            <person name="Winters P."/>
            <person name="Wipat A."/>
            <person name="Yamamoto H."/>
            <person name="Yamane K."/>
            <person name="Yasumoto K."/>
            <person name="Yata K."/>
            <person name="Yoshida K."/>
            <person name="Yoshikawa H.-F."/>
            <person name="Zumstein E."/>
            <person name="Yoshikawa H."/>
            <person name="Danchin A."/>
        </authorList>
    </citation>
    <scope>NUCLEOTIDE SEQUENCE [LARGE SCALE GENOMIC DNA]</scope>
    <source>
        <strain>168</strain>
    </source>
</reference>
<protein>
    <recommendedName>
        <fullName>Uncharacterized HTH-type transcriptional regulator YbbH</fullName>
    </recommendedName>
</protein>
<name>YBBH_BACSU</name>
<proteinExistence type="evidence at protein level"/>
<comment type="sequence caution" evidence="3">
    <conflict type="erroneous initiation">
        <sequence resource="EMBL-CDS" id="BAA19503"/>
    </conflict>
</comment>
<gene>
    <name type="primary">ybbH</name>
    <name type="ordered locus">BSU01690</name>
</gene>
<dbReference type="EMBL" id="AB002150">
    <property type="protein sequence ID" value="BAA19503.1"/>
    <property type="status" value="ALT_INIT"/>
    <property type="molecule type" value="Genomic_DNA"/>
</dbReference>
<dbReference type="EMBL" id="AL009126">
    <property type="protein sequence ID" value="CAB11945.1"/>
    <property type="molecule type" value="Genomic_DNA"/>
</dbReference>
<dbReference type="PIR" id="C69744">
    <property type="entry name" value="C69744"/>
</dbReference>
<dbReference type="RefSeq" id="WP_003234966.1">
    <property type="nucleotide sequence ID" value="NZ_OZ025638.1"/>
</dbReference>
<dbReference type="PDB" id="2O3F">
    <property type="method" value="X-ray"/>
    <property type="resolution" value="1.75 A"/>
    <property type="chains" value="A/B/C=1-108"/>
</dbReference>
<dbReference type="PDBsum" id="2O3F"/>
<dbReference type="SMR" id="Q45581"/>
<dbReference type="FunCoup" id="Q45581">
    <property type="interactions" value="49"/>
</dbReference>
<dbReference type="STRING" id="224308.BSU01690"/>
<dbReference type="PaxDb" id="224308-BSU01690"/>
<dbReference type="DNASU" id="938885"/>
<dbReference type="EnsemblBacteria" id="CAB11945">
    <property type="protein sequence ID" value="CAB11945"/>
    <property type="gene ID" value="BSU_01690"/>
</dbReference>
<dbReference type="GeneID" id="938885"/>
<dbReference type="KEGG" id="bsu:BSU01690"/>
<dbReference type="PATRIC" id="fig|224308.179.peg.175"/>
<dbReference type="eggNOG" id="COG1737">
    <property type="taxonomic scope" value="Bacteria"/>
</dbReference>
<dbReference type="InParanoid" id="Q45581"/>
<dbReference type="OrthoDB" id="370421at2"/>
<dbReference type="PhylomeDB" id="Q45581"/>
<dbReference type="BioCyc" id="BSUB:BSU01690-MONOMER"/>
<dbReference type="EvolutionaryTrace" id="Q45581"/>
<dbReference type="Proteomes" id="UP000001570">
    <property type="component" value="Chromosome"/>
</dbReference>
<dbReference type="GO" id="GO:0097367">
    <property type="term" value="F:carbohydrate derivative binding"/>
    <property type="evidence" value="ECO:0007669"/>
    <property type="project" value="InterPro"/>
</dbReference>
<dbReference type="GO" id="GO:0003677">
    <property type="term" value="F:DNA binding"/>
    <property type="evidence" value="ECO:0007669"/>
    <property type="project" value="UniProtKB-KW"/>
</dbReference>
<dbReference type="GO" id="GO:0003700">
    <property type="term" value="F:DNA-binding transcription factor activity"/>
    <property type="evidence" value="ECO:0000318"/>
    <property type="project" value="GO_Central"/>
</dbReference>
<dbReference type="GO" id="GO:1901135">
    <property type="term" value="P:carbohydrate derivative metabolic process"/>
    <property type="evidence" value="ECO:0007669"/>
    <property type="project" value="InterPro"/>
</dbReference>
<dbReference type="GO" id="GO:0006355">
    <property type="term" value="P:regulation of DNA-templated transcription"/>
    <property type="evidence" value="ECO:0000318"/>
    <property type="project" value="GO_Central"/>
</dbReference>
<dbReference type="CDD" id="cd05013">
    <property type="entry name" value="SIS_RpiR"/>
    <property type="match status" value="1"/>
</dbReference>
<dbReference type="Gene3D" id="3.40.50.10490">
    <property type="entry name" value="Glucose-6-phosphate isomerase like protein, domain 1"/>
    <property type="match status" value="1"/>
</dbReference>
<dbReference type="Gene3D" id="1.10.10.10">
    <property type="entry name" value="Winged helix-like DNA-binding domain superfamily/Winged helix DNA-binding domain"/>
    <property type="match status" value="1"/>
</dbReference>
<dbReference type="InterPro" id="IPR009057">
    <property type="entry name" value="Homeodomain-like_sf"/>
</dbReference>
<dbReference type="InterPro" id="IPR000281">
    <property type="entry name" value="HTH_RpiR"/>
</dbReference>
<dbReference type="InterPro" id="IPR047640">
    <property type="entry name" value="RpiR-like"/>
</dbReference>
<dbReference type="InterPro" id="IPR035472">
    <property type="entry name" value="RpiR-like_SIS"/>
</dbReference>
<dbReference type="InterPro" id="IPR001347">
    <property type="entry name" value="SIS_dom"/>
</dbReference>
<dbReference type="InterPro" id="IPR046348">
    <property type="entry name" value="SIS_dom_sf"/>
</dbReference>
<dbReference type="InterPro" id="IPR036388">
    <property type="entry name" value="WH-like_DNA-bd_sf"/>
</dbReference>
<dbReference type="PANTHER" id="PTHR30514">
    <property type="entry name" value="GLUCOKINASE"/>
    <property type="match status" value="1"/>
</dbReference>
<dbReference type="PANTHER" id="PTHR30514:SF10">
    <property type="entry name" value="MURR_RPIR FAMILY TRANSCRIPTIONAL REGULATOR"/>
    <property type="match status" value="1"/>
</dbReference>
<dbReference type="Pfam" id="PF01418">
    <property type="entry name" value="HTH_6"/>
    <property type="match status" value="1"/>
</dbReference>
<dbReference type="Pfam" id="PF01380">
    <property type="entry name" value="SIS"/>
    <property type="match status" value="1"/>
</dbReference>
<dbReference type="SUPFAM" id="SSF46689">
    <property type="entry name" value="Homeodomain-like"/>
    <property type="match status" value="1"/>
</dbReference>
<dbReference type="SUPFAM" id="SSF53697">
    <property type="entry name" value="SIS domain"/>
    <property type="match status" value="1"/>
</dbReference>
<dbReference type="PROSITE" id="PS51071">
    <property type="entry name" value="HTH_RPIR"/>
    <property type="match status" value="1"/>
</dbReference>
<dbReference type="PROSITE" id="PS51464">
    <property type="entry name" value="SIS"/>
    <property type="match status" value="1"/>
</dbReference>
<feature type="chain" id="PRO_0000068629" description="Uncharacterized HTH-type transcriptional regulator YbbH">
    <location>
        <begin position="1"/>
        <end position="283"/>
    </location>
</feature>
<feature type="domain" description="HTH rpiR-type" evidence="1">
    <location>
        <begin position="3"/>
        <end position="79"/>
    </location>
</feature>
<feature type="domain" description="SIS" evidence="2">
    <location>
        <begin position="123"/>
        <end position="264"/>
    </location>
</feature>
<feature type="DNA-binding region" description="H-T-H motif" evidence="1">
    <location>
        <begin position="39"/>
        <end position="58"/>
    </location>
</feature>
<feature type="helix" evidence="4">
    <location>
        <begin position="5"/>
        <end position="12"/>
    </location>
</feature>
<feature type="helix" evidence="4">
    <location>
        <begin position="18"/>
        <end position="29"/>
    </location>
</feature>
<feature type="helix" evidence="4">
    <location>
        <begin position="39"/>
        <end position="45"/>
    </location>
</feature>
<feature type="helix" evidence="4">
    <location>
        <begin position="50"/>
        <end position="57"/>
    </location>
</feature>
<feature type="helix" evidence="4">
    <location>
        <begin position="65"/>
        <end position="68"/>
    </location>
</feature>
<feature type="helix" evidence="4">
    <location>
        <begin position="71"/>
        <end position="77"/>
    </location>
</feature>
<feature type="helix" evidence="4">
    <location>
        <begin position="79"/>
        <end position="81"/>
    </location>
</feature>
<organism>
    <name type="scientific">Bacillus subtilis (strain 168)</name>
    <dbReference type="NCBI Taxonomy" id="224308"/>
    <lineage>
        <taxon>Bacteria</taxon>
        <taxon>Bacillati</taxon>
        <taxon>Bacillota</taxon>
        <taxon>Bacilli</taxon>
        <taxon>Bacillales</taxon>
        <taxon>Bacillaceae</taxon>
        <taxon>Bacillus</taxon>
    </lineage>
</organism>
<sequence length="283" mass="30709">MATGGLAIIQSMKHKLPPSERKLADYILAHPHKAIESTVNEISALANSSDAAVIRLCKSLGLKGFQDLKMRVAGDLAKPTFQGYRDIVPHEPLPSISEKTAGNAIQAIQDTSDLMDYKELERAVSLLLKAHTVHFIGLGASGIVAKDAQQKWLRIHKQATAFTDTHLVASLIANADKDDIVFAISFSGETQEIVELFAMAKEKGITTISLTQFSQTSVSALADVPLYTAHSNEALIRSAATSSRLAQLFIIDVLFLGMAAEQYETTTGYIDKTRAAIQSMRIK</sequence>